<dbReference type="EMBL" id="CP000419">
    <property type="protein sequence ID" value="ABJ66037.1"/>
    <property type="molecule type" value="Genomic_DNA"/>
</dbReference>
<dbReference type="RefSeq" id="WP_002945948.1">
    <property type="nucleotide sequence ID" value="NZ_CP086001.1"/>
</dbReference>
<dbReference type="SMR" id="Q03L85"/>
<dbReference type="KEGG" id="ste:STER_0787"/>
<dbReference type="HOGENOM" id="CLU_114306_2_2_9"/>
<dbReference type="GO" id="GO:1990904">
    <property type="term" value="C:ribonucleoprotein complex"/>
    <property type="evidence" value="ECO:0007669"/>
    <property type="project" value="UniProtKB-KW"/>
</dbReference>
<dbReference type="GO" id="GO:0005840">
    <property type="term" value="C:ribosome"/>
    <property type="evidence" value="ECO:0007669"/>
    <property type="project" value="UniProtKB-KW"/>
</dbReference>
<dbReference type="GO" id="GO:0003735">
    <property type="term" value="F:structural constituent of ribosome"/>
    <property type="evidence" value="ECO:0007669"/>
    <property type="project" value="InterPro"/>
</dbReference>
<dbReference type="GO" id="GO:0006412">
    <property type="term" value="P:translation"/>
    <property type="evidence" value="ECO:0007669"/>
    <property type="project" value="UniProtKB-UniRule"/>
</dbReference>
<dbReference type="Gene3D" id="4.10.830.30">
    <property type="entry name" value="Ribosomal protein L31"/>
    <property type="match status" value="1"/>
</dbReference>
<dbReference type="HAMAP" id="MF_00502">
    <property type="entry name" value="Ribosomal_bL31_2"/>
    <property type="match status" value="1"/>
</dbReference>
<dbReference type="InterPro" id="IPR034704">
    <property type="entry name" value="Ribosomal_bL28/bL31-like_sf"/>
</dbReference>
<dbReference type="InterPro" id="IPR002150">
    <property type="entry name" value="Ribosomal_bL31"/>
</dbReference>
<dbReference type="InterPro" id="IPR027493">
    <property type="entry name" value="Ribosomal_bL31_B"/>
</dbReference>
<dbReference type="InterPro" id="IPR042105">
    <property type="entry name" value="Ribosomal_bL31_sf"/>
</dbReference>
<dbReference type="NCBIfam" id="TIGR00105">
    <property type="entry name" value="L31"/>
    <property type="match status" value="1"/>
</dbReference>
<dbReference type="NCBIfam" id="NF002462">
    <property type="entry name" value="PRK01678.1"/>
    <property type="match status" value="1"/>
</dbReference>
<dbReference type="PANTHER" id="PTHR33280">
    <property type="entry name" value="50S RIBOSOMAL PROTEIN L31, CHLOROPLASTIC"/>
    <property type="match status" value="1"/>
</dbReference>
<dbReference type="PANTHER" id="PTHR33280:SF1">
    <property type="entry name" value="LARGE RIBOSOMAL SUBUNIT PROTEIN BL31C"/>
    <property type="match status" value="1"/>
</dbReference>
<dbReference type="Pfam" id="PF01197">
    <property type="entry name" value="Ribosomal_L31"/>
    <property type="match status" value="1"/>
</dbReference>
<dbReference type="PRINTS" id="PR01249">
    <property type="entry name" value="RIBOSOMALL31"/>
</dbReference>
<dbReference type="SUPFAM" id="SSF143800">
    <property type="entry name" value="L28p-like"/>
    <property type="match status" value="1"/>
</dbReference>
<dbReference type="PROSITE" id="PS01143">
    <property type="entry name" value="RIBOSOMAL_L31"/>
    <property type="match status" value="1"/>
</dbReference>
<proteinExistence type="inferred from homology"/>
<evidence type="ECO:0000255" key="1">
    <source>
        <dbReference type="HAMAP-Rule" id="MF_00502"/>
    </source>
</evidence>
<evidence type="ECO:0000305" key="2"/>
<gene>
    <name evidence="1" type="primary">rpmE2</name>
    <name type="ordered locus">STER_0787</name>
</gene>
<protein>
    <recommendedName>
        <fullName evidence="1">Large ribosomal subunit protein bL31B</fullName>
    </recommendedName>
    <alternativeName>
        <fullName evidence="2">50S ribosomal protein L31 type B</fullName>
    </alternativeName>
</protein>
<keyword id="KW-0687">Ribonucleoprotein</keyword>
<keyword id="KW-0689">Ribosomal protein</keyword>
<comment type="subunit">
    <text evidence="1">Part of the 50S ribosomal subunit.</text>
</comment>
<comment type="similarity">
    <text evidence="1">Belongs to the bacterial ribosomal protein bL31 family. Type B subfamily.</text>
</comment>
<sequence>MKKDIHPDYRPVVFMDTTTGYQFLSGSTKHSNETVEFEGETYPLIRVEISSDSHPFYTGRQKFTQADGRVDRFNKKYGLK</sequence>
<feature type="chain" id="PRO_1000014721" description="Large ribosomal subunit protein bL31B">
    <location>
        <begin position="1"/>
        <end position="80"/>
    </location>
</feature>
<accession>Q03L85</accession>
<reference key="1">
    <citation type="journal article" date="2006" name="Proc. Natl. Acad. Sci. U.S.A.">
        <title>Comparative genomics of the lactic acid bacteria.</title>
        <authorList>
            <person name="Makarova K.S."/>
            <person name="Slesarev A."/>
            <person name="Wolf Y.I."/>
            <person name="Sorokin A."/>
            <person name="Mirkin B."/>
            <person name="Koonin E.V."/>
            <person name="Pavlov A."/>
            <person name="Pavlova N."/>
            <person name="Karamychev V."/>
            <person name="Polouchine N."/>
            <person name="Shakhova V."/>
            <person name="Grigoriev I."/>
            <person name="Lou Y."/>
            <person name="Rohksar D."/>
            <person name="Lucas S."/>
            <person name="Huang K."/>
            <person name="Goodstein D.M."/>
            <person name="Hawkins T."/>
            <person name="Plengvidhya V."/>
            <person name="Welker D."/>
            <person name="Hughes J."/>
            <person name="Goh Y."/>
            <person name="Benson A."/>
            <person name="Baldwin K."/>
            <person name="Lee J.-H."/>
            <person name="Diaz-Muniz I."/>
            <person name="Dosti B."/>
            <person name="Smeianov V."/>
            <person name="Wechter W."/>
            <person name="Barabote R."/>
            <person name="Lorca G."/>
            <person name="Altermann E."/>
            <person name="Barrangou R."/>
            <person name="Ganesan B."/>
            <person name="Xie Y."/>
            <person name="Rawsthorne H."/>
            <person name="Tamir D."/>
            <person name="Parker C."/>
            <person name="Breidt F."/>
            <person name="Broadbent J.R."/>
            <person name="Hutkins R."/>
            <person name="O'Sullivan D."/>
            <person name="Steele J."/>
            <person name="Unlu G."/>
            <person name="Saier M.H. Jr."/>
            <person name="Klaenhammer T."/>
            <person name="Richardson P."/>
            <person name="Kozyavkin S."/>
            <person name="Weimer B.C."/>
            <person name="Mills D.A."/>
        </authorList>
    </citation>
    <scope>NUCLEOTIDE SEQUENCE [LARGE SCALE GENOMIC DNA]</scope>
    <source>
        <strain>ATCC BAA-491 / LMD-9</strain>
    </source>
</reference>
<organism>
    <name type="scientific">Streptococcus thermophilus (strain ATCC BAA-491 / LMD-9)</name>
    <dbReference type="NCBI Taxonomy" id="322159"/>
    <lineage>
        <taxon>Bacteria</taxon>
        <taxon>Bacillati</taxon>
        <taxon>Bacillota</taxon>
        <taxon>Bacilli</taxon>
        <taxon>Lactobacillales</taxon>
        <taxon>Streptococcaceae</taxon>
        <taxon>Streptococcus</taxon>
    </lineage>
</organism>
<name>RL31B_STRTD</name>